<sequence>MDLFEYQAKKLFAEHGVPVPTGKIATTPQQAREIATELGGKVVVKAQVKAGGRGKAGGVKVADGPDDAFEKASAILGMDIKGHTVHSVLVEQASNIAEEYYASFLLDRANRTFLAMASREGGMEIEEVAATNPEALARIHIDPLTGVDAAKAREIAVAAKLPEAAIEGASVLLVKLWEVFVKADATLVEVNPLILTGDGKVIALDGKVTLDENADFRHPENAELVDVAAVDPLEQKAKEKGLNYVKLEGQVGIIGNGAGLVMSTLDVVTYAGEEFGGQRPANFLDIGGGASAEVMANGLSIILSDPSVKSVFVNIFGGITACDAVANGIVQALAIVGDVSTPLVVRLDGNNAEEGRRILKEANLPVVKPVDTMDGAAKLAAELAAAAA</sequence>
<comment type="function">
    <text evidence="1">Succinyl-CoA synthetase functions in the citric acid cycle (TCA), coupling the hydrolysis of succinyl-CoA to the synthesis of either ATP or GTP and thus represents the only step of substrate-level phosphorylation in the TCA. The beta subunit provides nucleotide specificity of the enzyme and binds the substrate succinate, while the binding sites for coenzyme A and phosphate are found in the alpha subunit.</text>
</comment>
<comment type="catalytic activity">
    <reaction evidence="1">
        <text>succinate + ATP + CoA = succinyl-CoA + ADP + phosphate</text>
        <dbReference type="Rhea" id="RHEA:17661"/>
        <dbReference type="ChEBI" id="CHEBI:30031"/>
        <dbReference type="ChEBI" id="CHEBI:30616"/>
        <dbReference type="ChEBI" id="CHEBI:43474"/>
        <dbReference type="ChEBI" id="CHEBI:57287"/>
        <dbReference type="ChEBI" id="CHEBI:57292"/>
        <dbReference type="ChEBI" id="CHEBI:456216"/>
        <dbReference type="EC" id="6.2.1.5"/>
    </reaction>
    <physiologicalReaction direction="right-to-left" evidence="1">
        <dbReference type="Rhea" id="RHEA:17663"/>
    </physiologicalReaction>
</comment>
<comment type="catalytic activity">
    <reaction evidence="1">
        <text>GTP + succinate + CoA = succinyl-CoA + GDP + phosphate</text>
        <dbReference type="Rhea" id="RHEA:22120"/>
        <dbReference type="ChEBI" id="CHEBI:30031"/>
        <dbReference type="ChEBI" id="CHEBI:37565"/>
        <dbReference type="ChEBI" id="CHEBI:43474"/>
        <dbReference type="ChEBI" id="CHEBI:57287"/>
        <dbReference type="ChEBI" id="CHEBI:57292"/>
        <dbReference type="ChEBI" id="CHEBI:58189"/>
    </reaction>
    <physiologicalReaction direction="right-to-left" evidence="1">
        <dbReference type="Rhea" id="RHEA:22122"/>
    </physiologicalReaction>
</comment>
<comment type="cofactor">
    <cofactor evidence="1">
        <name>Mg(2+)</name>
        <dbReference type="ChEBI" id="CHEBI:18420"/>
    </cofactor>
    <text evidence="1">Binds 1 Mg(2+) ion per subunit.</text>
</comment>
<comment type="pathway">
    <text evidence="1">Carbohydrate metabolism; tricarboxylic acid cycle; succinate from succinyl-CoA (ligase route): step 1/1.</text>
</comment>
<comment type="subunit">
    <text evidence="1">Heterotetramer of two alpha and two beta subunits.</text>
</comment>
<comment type="similarity">
    <text evidence="1">Belongs to the succinate/malate CoA ligase beta subunit family.</text>
</comment>
<keyword id="KW-0067">ATP-binding</keyword>
<keyword id="KW-0436">Ligase</keyword>
<keyword id="KW-0460">Magnesium</keyword>
<keyword id="KW-0479">Metal-binding</keyword>
<keyword id="KW-0547">Nucleotide-binding</keyword>
<keyword id="KW-0816">Tricarboxylic acid cycle</keyword>
<organism>
    <name type="scientific">Parafrankia sp. (strain EAN1pec)</name>
    <dbReference type="NCBI Taxonomy" id="298653"/>
    <lineage>
        <taxon>Bacteria</taxon>
        <taxon>Bacillati</taxon>
        <taxon>Actinomycetota</taxon>
        <taxon>Actinomycetes</taxon>
        <taxon>Frankiales</taxon>
        <taxon>Frankiaceae</taxon>
        <taxon>Parafrankia</taxon>
    </lineage>
</organism>
<protein>
    <recommendedName>
        <fullName evidence="1">Succinate--CoA ligase [ADP-forming] subunit beta</fullName>
        <ecNumber evidence="1">6.2.1.5</ecNumber>
    </recommendedName>
    <alternativeName>
        <fullName evidence="1">Succinyl-CoA synthetase subunit beta</fullName>
        <shortName evidence="1">SCS-beta</shortName>
    </alternativeName>
</protein>
<reference key="1">
    <citation type="journal article" date="2007" name="Genome Res.">
        <title>Genome characteristics of facultatively symbiotic Frankia sp. strains reflect host range and host plant biogeography.</title>
        <authorList>
            <person name="Normand P."/>
            <person name="Lapierre P."/>
            <person name="Tisa L.S."/>
            <person name="Gogarten J.P."/>
            <person name="Alloisio N."/>
            <person name="Bagnarol E."/>
            <person name="Bassi C.A."/>
            <person name="Berry A.M."/>
            <person name="Bickhart D.M."/>
            <person name="Choisne N."/>
            <person name="Couloux A."/>
            <person name="Cournoyer B."/>
            <person name="Cruveiller S."/>
            <person name="Daubin V."/>
            <person name="Demange N."/>
            <person name="Francino M.P."/>
            <person name="Goltsman E."/>
            <person name="Huang Y."/>
            <person name="Kopp O.R."/>
            <person name="Labarre L."/>
            <person name="Lapidus A."/>
            <person name="Lavire C."/>
            <person name="Marechal J."/>
            <person name="Martinez M."/>
            <person name="Mastronunzio J.E."/>
            <person name="Mullin B.C."/>
            <person name="Niemann J."/>
            <person name="Pujic P."/>
            <person name="Rawnsley T."/>
            <person name="Rouy Z."/>
            <person name="Schenowitz C."/>
            <person name="Sellstedt A."/>
            <person name="Tavares F."/>
            <person name="Tomkins J.P."/>
            <person name="Vallenet D."/>
            <person name="Valverde C."/>
            <person name="Wall L.G."/>
            <person name="Wang Y."/>
            <person name="Medigue C."/>
            <person name="Benson D.R."/>
        </authorList>
    </citation>
    <scope>NUCLEOTIDE SEQUENCE [LARGE SCALE GENOMIC DNA]</scope>
    <source>
        <strain>EAN1pec</strain>
    </source>
</reference>
<proteinExistence type="inferred from homology"/>
<evidence type="ECO:0000255" key="1">
    <source>
        <dbReference type="HAMAP-Rule" id="MF_00558"/>
    </source>
</evidence>
<accession>A8LAW3</accession>
<gene>
    <name evidence="1" type="primary">sucC</name>
    <name type="ordered locus">Franean1_5980</name>
</gene>
<name>SUCC_PARS2</name>
<feature type="chain" id="PRO_1000129191" description="Succinate--CoA ligase [ADP-forming] subunit beta">
    <location>
        <begin position="1"/>
        <end position="388"/>
    </location>
</feature>
<feature type="domain" description="ATP-grasp" evidence="1">
    <location>
        <begin position="9"/>
        <end position="236"/>
    </location>
</feature>
<feature type="binding site" evidence="1">
    <location>
        <position position="45"/>
    </location>
    <ligand>
        <name>ATP</name>
        <dbReference type="ChEBI" id="CHEBI:30616"/>
    </ligand>
</feature>
<feature type="binding site" evidence="1">
    <location>
        <begin position="52"/>
        <end position="54"/>
    </location>
    <ligand>
        <name>ATP</name>
        <dbReference type="ChEBI" id="CHEBI:30616"/>
    </ligand>
</feature>
<feature type="binding site" evidence="1">
    <location>
        <position position="91"/>
    </location>
    <ligand>
        <name>ATP</name>
        <dbReference type="ChEBI" id="CHEBI:30616"/>
    </ligand>
</feature>
<feature type="binding site" evidence="1">
    <location>
        <position position="94"/>
    </location>
    <ligand>
        <name>ATP</name>
        <dbReference type="ChEBI" id="CHEBI:30616"/>
    </ligand>
</feature>
<feature type="binding site" evidence="1">
    <location>
        <position position="99"/>
    </location>
    <ligand>
        <name>ATP</name>
        <dbReference type="ChEBI" id="CHEBI:30616"/>
    </ligand>
</feature>
<feature type="binding site" evidence="1">
    <location>
        <position position="191"/>
    </location>
    <ligand>
        <name>Mg(2+)</name>
        <dbReference type="ChEBI" id="CHEBI:18420"/>
    </ligand>
</feature>
<feature type="binding site" evidence="1">
    <location>
        <position position="205"/>
    </location>
    <ligand>
        <name>Mg(2+)</name>
        <dbReference type="ChEBI" id="CHEBI:18420"/>
    </ligand>
</feature>
<feature type="binding site" evidence="1">
    <location>
        <position position="256"/>
    </location>
    <ligand>
        <name>substrate</name>
        <note>ligand shared with subunit alpha</note>
    </ligand>
</feature>
<feature type="binding site" evidence="1">
    <location>
        <begin position="318"/>
        <end position="320"/>
    </location>
    <ligand>
        <name>substrate</name>
        <note>ligand shared with subunit alpha</note>
    </ligand>
</feature>
<dbReference type="EC" id="6.2.1.5" evidence="1"/>
<dbReference type="EMBL" id="CP000820">
    <property type="protein sequence ID" value="ABW15324.1"/>
    <property type="molecule type" value="Genomic_DNA"/>
</dbReference>
<dbReference type="RefSeq" id="WP_020463422.1">
    <property type="nucleotide sequence ID" value="NC_009921.1"/>
</dbReference>
<dbReference type="SMR" id="A8LAW3"/>
<dbReference type="STRING" id="298653.Franean1_5980"/>
<dbReference type="KEGG" id="fre:Franean1_5980"/>
<dbReference type="eggNOG" id="COG0045">
    <property type="taxonomic scope" value="Bacteria"/>
</dbReference>
<dbReference type="HOGENOM" id="CLU_037430_0_2_11"/>
<dbReference type="UniPathway" id="UPA00223">
    <property type="reaction ID" value="UER00999"/>
</dbReference>
<dbReference type="GO" id="GO:0005829">
    <property type="term" value="C:cytosol"/>
    <property type="evidence" value="ECO:0007669"/>
    <property type="project" value="TreeGrafter"/>
</dbReference>
<dbReference type="GO" id="GO:0042709">
    <property type="term" value="C:succinate-CoA ligase complex"/>
    <property type="evidence" value="ECO:0007669"/>
    <property type="project" value="TreeGrafter"/>
</dbReference>
<dbReference type="GO" id="GO:0005524">
    <property type="term" value="F:ATP binding"/>
    <property type="evidence" value="ECO:0007669"/>
    <property type="project" value="UniProtKB-UniRule"/>
</dbReference>
<dbReference type="GO" id="GO:0000287">
    <property type="term" value="F:magnesium ion binding"/>
    <property type="evidence" value="ECO:0007669"/>
    <property type="project" value="UniProtKB-UniRule"/>
</dbReference>
<dbReference type="GO" id="GO:0004775">
    <property type="term" value="F:succinate-CoA ligase (ADP-forming) activity"/>
    <property type="evidence" value="ECO:0007669"/>
    <property type="project" value="UniProtKB-UniRule"/>
</dbReference>
<dbReference type="GO" id="GO:0004776">
    <property type="term" value="F:succinate-CoA ligase (GDP-forming) activity"/>
    <property type="evidence" value="ECO:0007669"/>
    <property type="project" value="RHEA"/>
</dbReference>
<dbReference type="GO" id="GO:0006104">
    <property type="term" value="P:succinyl-CoA metabolic process"/>
    <property type="evidence" value="ECO:0007669"/>
    <property type="project" value="TreeGrafter"/>
</dbReference>
<dbReference type="GO" id="GO:0006099">
    <property type="term" value="P:tricarboxylic acid cycle"/>
    <property type="evidence" value="ECO:0007669"/>
    <property type="project" value="UniProtKB-UniRule"/>
</dbReference>
<dbReference type="FunFam" id="3.30.1490.20:FF:000014">
    <property type="entry name" value="Succinate--CoA ligase [ADP-forming] subunit beta"/>
    <property type="match status" value="1"/>
</dbReference>
<dbReference type="FunFam" id="3.30.470.20:FF:000002">
    <property type="entry name" value="Succinate--CoA ligase [ADP-forming] subunit beta"/>
    <property type="match status" value="1"/>
</dbReference>
<dbReference type="FunFam" id="3.40.50.261:FF:000007">
    <property type="entry name" value="Succinate--CoA ligase [ADP-forming] subunit beta"/>
    <property type="match status" value="1"/>
</dbReference>
<dbReference type="Gene3D" id="3.30.1490.20">
    <property type="entry name" value="ATP-grasp fold, A domain"/>
    <property type="match status" value="1"/>
</dbReference>
<dbReference type="Gene3D" id="3.30.470.20">
    <property type="entry name" value="ATP-grasp fold, B domain"/>
    <property type="match status" value="1"/>
</dbReference>
<dbReference type="Gene3D" id="3.40.50.261">
    <property type="entry name" value="Succinyl-CoA synthetase domains"/>
    <property type="match status" value="1"/>
</dbReference>
<dbReference type="HAMAP" id="MF_00558">
    <property type="entry name" value="Succ_CoA_beta"/>
    <property type="match status" value="1"/>
</dbReference>
<dbReference type="InterPro" id="IPR011761">
    <property type="entry name" value="ATP-grasp"/>
</dbReference>
<dbReference type="InterPro" id="IPR013650">
    <property type="entry name" value="ATP-grasp_succ-CoA_synth-type"/>
</dbReference>
<dbReference type="InterPro" id="IPR013815">
    <property type="entry name" value="ATP_grasp_subdomain_1"/>
</dbReference>
<dbReference type="InterPro" id="IPR017866">
    <property type="entry name" value="Succ-CoA_synthase_bsu_CS"/>
</dbReference>
<dbReference type="InterPro" id="IPR005811">
    <property type="entry name" value="SUCC_ACL_C"/>
</dbReference>
<dbReference type="InterPro" id="IPR005809">
    <property type="entry name" value="Succ_CoA_ligase-like_bsu"/>
</dbReference>
<dbReference type="InterPro" id="IPR016102">
    <property type="entry name" value="Succinyl-CoA_synth-like"/>
</dbReference>
<dbReference type="NCBIfam" id="NF001913">
    <property type="entry name" value="PRK00696.1"/>
    <property type="match status" value="1"/>
</dbReference>
<dbReference type="NCBIfam" id="TIGR01016">
    <property type="entry name" value="sucCoAbeta"/>
    <property type="match status" value="1"/>
</dbReference>
<dbReference type="PANTHER" id="PTHR11815:SF10">
    <property type="entry name" value="SUCCINATE--COA LIGASE [GDP-FORMING] SUBUNIT BETA, MITOCHONDRIAL"/>
    <property type="match status" value="1"/>
</dbReference>
<dbReference type="PANTHER" id="PTHR11815">
    <property type="entry name" value="SUCCINYL-COA SYNTHETASE BETA CHAIN"/>
    <property type="match status" value="1"/>
</dbReference>
<dbReference type="Pfam" id="PF08442">
    <property type="entry name" value="ATP-grasp_2"/>
    <property type="match status" value="1"/>
</dbReference>
<dbReference type="Pfam" id="PF00549">
    <property type="entry name" value="Ligase_CoA"/>
    <property type="match status" value="1"/>
</dbReference>
<dbReference type="PIRSF" id="PIRSF001554">
    <property type="entry name" value="SucCS_beta"/>
    <property type="match status" value="1"/>
</dbReference>
<dbReference type="SUPFAM" id="SSF56059">
    <property type="entry name" value="Glutathione synthetase ATP-binding domain-like"/>
    <property type="match status" value="1"/>
</dbReference>
<dbReference type="SUPFAM" id="SSF52210">
    <property type="entry name" value="Succinyl-CoA synthetase domains"/>
    <property type="match status" value="1"/>
</dbReference>
<dbReference type="PROSITE" id="PS50975">
    <property type="entry name" value="ATP_GRASP"/>
    <property type="match status" value="1"/>
</dbReference>
<dbReference type="PROSITE" id="PS01217">
    <property type="entry name" value="SUCCINYL_COA_LIG_3"/>
    <property type="match status" value="1"/>
</dbReference>